<name>CEMA_GRATL</name>
<keyword id="KW-0050">Antiport</keyword>
<keyword id="KW-0150">Chloroplast</keyword>
<keyword id="KW-0375">Hydrogen ion transport</keyword>
<keyword id="KW-0406">Ion transport</keyword>
<keyword id="KW-0472">Membrane</keyword>
<keyword id="KW-0934">Plastid</keyword>
<keyword id="KW-1001">Plastid inner membrane</keyword>
<keyword id="KW-0630">Potassium</keyword>
<keyword id="KW-0633">Potassium transport</keyword>
<keyword id="KW-0812">Transmembrane</keyword>
<keyword id="KW-1133">Transmembrane helix</keyword>
<keyword id="KW-0813">Transport</keyword>
<comment type="function">
    <text evidence="1">Contributes to K(+)/H(+) antiport activity by supporting proton efflux to control proton extrusion and homeostasis in chloroplasts in a light-dependent manner to modulate photosynthesis. Prevents excessive induction of non-photochemical quenching (NPQ) under continuous-light conditions. Indirectly promotes efficient inorganic carbon uptake into chloroplasts.</text>
</comment>
<comment type="catalytic activity">
    <reaction evidence="1">
        <text>K(+)(in) + H(+)(out) = K(+)(out) + H(+)(in)</text>
        <dbReference type="Rhea" id="RHEA:29467"/>
        <dbReference type="ChEBI" id="CHEBI:15378"/>
        <dbReference type="ChEBI" id="CHEBI:29103"/>
    </reaction>
</comment>
<comment type="subcellular location">
    <subcellularLocation>
        <location evidence="1">Plastid</location>
        <location evidence="1">Chloroplast inner membrane</location>
        <topology evidence="1">Multi-pass membrane protein</topology>
    </subcellularLocation>
</comment>
<comment type="similarity">
    <text evidence="1 2">Belongs to the CemA family.</text>
</comment>
<feature type="chain" id="PRO_0000216642" description="Potassium/proton antiporter CemA">
    <location>
        <begin position="1"/>
        <end position="278"/>
    </location>
</feature>
<feature type="transmembrane region" description="Helical" evidence="1">
    <location>
        <begin position="61"/>
        <end position="81"/>
    </location>
</feature>
<feature type="transmembrane region" description="Helical" evidence="1">
    <location>
        <begin position="154"/>
        <end position="174"/>
    </location>
</feature>
<feature type="transmembrane region" description="Helical" evidence="1">
    <location>
        <begin position="203"/>
        <end position="223"/>
    </location>
</feature>
<feature type="transmembrane region" description="Helical" evidence="1">
    <location>
        <begin position="238"/>
        <end position="258"/>
    </location>
</feature>
<geneLocation type="chloroplast"/>
<proteinExistence type="inferred from homology"/>
<accession>Q6B8P8</accession>
<gene>
    <name evidence="1" type="primary">cemA</name>
    <name type="ordered locus">Grc000156</name>
</gene>
<sequence length="278" mass="32372">MKYWNLKKINQSSLDKTGVIPRSISKLFEKFKKELDPNAEVEAIEEFKVARYQTIASVKYVVFLFIIPVLINQVSKSFLFGPFINYLWNRDEHIIFLNHSQEERAFAELQRFEEKLHFEILIGKIDSPSSNLINYKMTEKALELAIDYANESSCAITNILADLLSIAIFISILISSKRQFSILKSFLNELIYSLSDTAKAFLIILFTDMFVGFHSPHGWEVIIEIILRHLGLPESRDFIFVFISTFPVILDTIFKYWIFRYLNKISPSAVATYHNMNE</sequence>
<reference key="1">
    <citation type="journal article" date="2004" name="J. Mol. Evol.">
        <title>Comparative analysis of the complete plastid genome sequence of the red alga Gracilaria tenuistipitata var. liui provides insights into the evolution of rhodoplasts and their relationship to other plastids.</title>
        <authorList>
            <person name="Hagopian J.C."/>
            <person name="Reis M."/>
            <person name="Kitajima J.P."/>
            <person name="Bhattacharya D."/>
            <person name="de Oliveira M.C."/>
        </authorList>
    </citation>
    <scope>NUCLEOTIDE SEQUENCE [LARGE SCALE GENOMIC DNA]</scope>
</reference>
<evidence type="ECO:0000255" key="1">
    <source>
        <dbReference type="HAMAP-Rule" id="MF_01308"/>
    </source>
</evidence>
<evidence type="ECO:0000305" key="2"/>
<organism>
    <name type="scientific">Gracilaria tenuistipitata var. liui</name>
    <name type="common">Red alga</name>
    <dbReference type="NCBI Taxonomy" id="285951"/>
    <lineage>
        <taxon>Eukaryota</taxon>
        <taxon>Rhodophyta</taxon>
        <taxon>Florideophyceae</taxon>
        <taxon>Rhodymeniophycidae</taxon>
        <taxon>Gracilariales</taxon>
        <taxon>Gracilariaceae</taxon>
        <taxon>Gracilaria</taxon>
        <taxon>Gracilaria tenuistipitata</taxon>
    </lineage>
</organism>
<protein>
    <recommendedName>
        <fullName evidence="1">Potassium/proton antiporter CemA</fullName>
    </recommendedName>
    <alternativeName>
        <fullName evidence="1">Chloroplast envelope membrane protein A</fullName>
        <shortName evidence="1">CemA</shortName>
    </alternativeName>
</protein>
<dbReference type="EMBL" id="AY673996">
    <property type="protein sequence ID" value="AAT79737.1"/>
    <property type="molecule type" value="Genomic_DNA"/>
</dbReference>
<dbReference type="RefSeq" id="YP_063662.1">
    <property type="nucleotide sequence ID" value="NC_006137.1"/>
</dbReference>
<dbReference type="SMR" id="Q6B8P8"/>
<dbReference type="GeneID" id="2944046"/>
<dbReference type="GO" id="GO:0009706">
    <property type="term" value="C:chloroplast inner membrane"/>
    <property type="evidence" value="ECO:0007669"/>
    <property type="project" value="UniProtKB-SubCell"/>
</dbReference>
<dbReference type="GO" id="GO:0015297">
    <property type="term" value="F:antiporter activity"/>
    <property type="evidence" value="ECO:0007669"/>
    <property type="project" value="UniProtKB-KW"/>
</dbReference>
<dbReference type="GO" id="GO:0015078">
    <property type="term" value="F:proton transmembrane transporter activity"/>
    <property type="evidence" value="ECO:0007669"/>
    <property type="project" value="UniProtKB-UniRule"/>
</dbReference>
<dbReference type="GO" id="GO:0006813">
    <property type="term" value="P:potassium ion transport"/>
    <property type="evidence" value="ECO:0007669"/>
    <property type="project" value="UniProtKB-UniRule"/>
</dbReference>
<dbReference type="HAMAP" id="MF_01308">
    <property type="entry name" value="CemA_PxcA"/>
    <property type="match status" value="1"/>
</dbReference>
<dbReference type="InterPro" id="IPR004282">
    <property type="entry name" value="CemA"/>
</dbReference>
<dbReference type="PANTHER" id="PTHR33650:SF2">
    <property type="entry name" value="CHLOROPLAST ENVELOPE MEMBRANE PROTEIN"/>
    <property type="match status" value="1"/>
</dbReference>
<dbReference type="PANTHER" id="PTHR33650">
    <property type="entry name" value="CHLOROPLAST ENVELOPE MEMBRANE PROTEIN-RELATED"/>
    <property type="match status" value="1"/>
</dbReference>
<dbReference type="Pfam" id="PF03040">
    <property type="entry name" value="CemA"/>
    <property type="match status" value="1"/>
</dbReference>